<proteinExistence type="inferred from homology"/>
<organism>
    <name type="scientific">Phytophthora cryptogea</name>
    <dbReference type="NCBI Taxonomy" id="4786"/>
    <lineage>
        <taxon>Eukaryota</taxon>
        <taxon>Sar</taxon>
        <taxon>Stramenopiles</taxon>
        <taxon>Oomycota</taxon>
        <taxon>Peronosporales</taxon>
        <taxon>Peronosporaceae</taxon>
        <taxon>Phytophthora</taxon>
    </lineage>
</organism>
<evidence type="ECO:0000250" key="1"/>
<evidence type="ECO:0000305" key="2"/>
<accession>P41803</accession>
<keyword id="KW-1015">Disulfide bond</keyword>
<keyword id="KW-0928">Hypersensitive response elicitation</keyword>
<keyword id="KW-0964">Secreted</keyword>
<keyword id="KW-0732">Signal</keyword>
<sequence length="123" mass="12695">MQFTALFAATAVALVGSVSATACTTTQQTAAYVALVSILSESFFSTCASDSGYSMLTATALPTTAQYELMCASTACQEMIEEIIALNPPDCDLTVPTSGLVINVYEYANDFASTCASLSSSPA</sequence>
<protein>
    <recommendedName>
        <fullName>Highly acidic elicitin 20</fullName>
    </recommendedName>
</protein>
<gene>
    <name type="primary">B20</name>
</gene>
<dbReference type="EMBL" id="Z34460">
    <property type="protein sequence ID" value="CAA84225.1"/>
    <property type="molecule type" value="Genomic_DNA"/>
</dbReference>
<dbReference type="PIR" id="S49906">
    <property type="entry name" value="S49906"/>
</dbReference>
<dbReference type="SMR" id="P41803"/>
<dbReference type="GO" id="GO:0005576">
    <property type="term" value="C:extracellular region"/>
    <property type="evidence" value="ECO:0007669"/>
    <property type="project" value="UniProtKB-SubCell"/>
</dbReference>
<dbReference type="GO" id="GO:0052040">
    <property type="term" value="P:symbiont-mediated perturbation of host programmed cell death"/>
    <property type="evidence" value="ECO:0007669"/>
    <property type="project" value="UniProtKB-KW"/>
</dbReference>
<dbReference type="Gene3D" id="1.10.239.10">
    <property type="entry name" value="Elicitin domain"/>
    <property type="match status" value="1"/>
</dbReference>
<dbReference type="InterPro" id="IPR002200">
    <property type="entry name" value="Elicitin"/>
</dbReference>
<dbReference type="InterPro" id="IPR036470">
    <property type="entry name" value="Elicitin_sf"/>
</dbReference>
<dbReference type="Pfam" id="PF00964">
    <property type="entry name" value="Elicitin"/>
    <property type="match status" value="1"/>
</dbReference>
<dbReference type="PRINTS" id="PR00948">
    <property type="entry name" value="ELICITIN"/>
</dbReference>
<dbReference type="SMART" id="SM01187">
    <property type="entry name" value="Elicitin"/>
    <property type="match status" value="1"/>
</dbReference>
<dbReference type="SUPFAM" id="SSF48647">
    <property type="entry name" value="Fungal elicitin"/>
    <property type="match status" value="1"/>
</dbReference>
<name>ELIA2_PHYCR</name>
<reference key="1">
    <citation type="journal article" date="1995" name="Mol. Plant Microbe Interact.">
        <title>Characterization of a gene cluster of Phytophthora cryptogea which codes for elicitins, proteins inducing a hypersensitive-like response in tobacco.</title>
        <authorList>
            <person name="Panabieres F."/>
            <person name="Marais A."/>
            <person name="Le Berre J.Y."/>
            <person name="Penot I."/>
            <person name="Fournier D."/>
            <person name="Ricci P."/>
        </authorList>
    </citation>
    <scope>NUCLEOTIDE SEQUENCE [GENOMIC DNA]</scope>
    <source>
        <strain>Isolate 52</strain>
    </source>
</reference>
<feature type="signal peptide" evidence="1">
    <location>
        <begin position="1"/>
        <end position="20"/>
    </location>
</feature>
<feature type="chain" id="PRO_0000007797" description="Highly acidic elicitin 20">
    <location>
        <begin position="21"/>
        <end position="123"/>
    </location>
</feature>
<feature type="disulfide bond" evidence="1">
    <location>
        <begin position="23"/>
        <end position="91"/>
    </location>
</feature>
<feature type="disulfide bond" evidence="1">
    <location>
        <begin position="47"/>
        <end position="76"/>
    </location>
</feature>
<feature type="disulfide bond" evidence="1">
    <location>
        <begin position="71"/>
        <end position="115"/>
    </location>
</feature>
<comment type="function">
    <text>Induces local and distal defense responses (incompatible hypersensitive reaction) in plants from the solanaceae and cruciferae families. Elicits leaf necrosis and causes the accumulation of pathogenesis-related proteins. Might interact with the lipidic molecules of the plasma membrane.</text>
</comment>
<comment type="subcellular location">
    <subcellularLocation>
        <location>Secreted</location>
    </subcellularLocation>
</comment>
<comment type="similarity">
    <text evidence="2">Belongs to the elicitin family.</text>
</comment>